<protein>
    <recommendedName>
        <fullName evidence="1">Membrane protein insertase YidC</fullName>
    </recommendedName>
    <alternativeName>
        <fullName evidence="1">Foldase YidC</fullName>
    </alternativeName>
    <alternativeName>
        <fullName evidence="1">Membrane integrase YidC</fullName>
    </alternativeName>
    <alternativeName>
        <fullName evidence="1">Membrane protein YidC</fullName>
    </alternativeName>
</protein>
<organism>
    <name type="scientific">Bacteroides fragilis (strain ATCC 25285 / DSM 2151 / CCUG 4856 / JCM 11019 / LMG 10263 / NCTC 9343 / Onslow / VPI 2553 / EN-2)</name>
    <dbReference type="NCBI Taxonomy" id="272559"/>
    <lineage>
        <taxon>Bacteria</taxon>
        <taxon>Pseudomonadati</taxon>
        <taxon>Bacteroidota</taxon>
        <taxon>Bacteroidia</taxon>
        <taxon>Bacteroidales</taxon>
        <taxon>Bacteroidaceae</taxon>
        <taxon>Bacteroides</taxon>
    </lineage>
</organism>
<reference key="1">
    <citation type="journal article" date="2005" name="Science">
        <title>Extensive DNA inversions in the B. fragilis genome control variable gene expression.</title>
        <authorList>
            <person name="Cerdeno-Tarraga A.-M."/>
            <person name="Patrick S."/>
            <person name="Crossman L.C."/>
            <person name="Blakely G."/>
            <person name="Abratt V."/>
            <person name="Lennard N."/>
            <person name="Poxton I."/>
            <person name="Duerden B."/>
            <person name="Harris B."/>
            <person name="Quail M.A."/>
            <person name="Barron A."/>
            <person name="Clark L."/>
            <person name="Corton C."/>
            <person name="Doggett J."/>
            <person name="Holden M.T.G."/>
            <person name="Larke N."/>
            <person name="Line A."/>
            <person name="Lord A."/>
            <person name="Norbertczak H."/>
            <person name="Ormond D."/>
            <person name="Price C."/>
            <person name="Rabbinowitsch E."/>
            <person name="Woodward J."/>
            <person name="Barrell B.G."/>
            <person name="Parkhill J."/>
        </authorList>
    </citation>
    <scope>NUCLEOTIDE SEQUENCE [LARGE SCALE GENOMIC DNA]</scope>
    <source>
        <strain>ATCC 25285 / DSM 2151 / CCUG 4856 / JCM 11019 / LMG 10263 / NCTC 9343 / Onslow / VPI 2553 / EN-2</strain>
    </source>
</reference>
<name>YIDC_BACFN</name>
<gene>
    <name evidence="1" type="primary">yidC</name>
    <name type="ordered locus">BF2625</name>
</gene>
<proteinExistence type="inferred from homology"/>
<feature type="chain" id="PRO_1000070058" description="Membrane protein insertase YidC">
    <location>
        <begin position="1"/>
        <end position="618"/>
    </location>
</feature>
<feature type="transmembrane region" description="Helical" evidence="1">
    <location>
        <begin position="3"/>
        <end position="23"/>
    </location>
</feature>
<feature type="transmembrane region" description="Helical" evidence="1">
    <location>
        <begin position="363"/>
        <end position="383"/>
    </location>
</feature>
<feature type="transmembrane region" description="Helical" evidence="1">
    <location>
        <begin position="439"/>
        <end position="459"/>
    </location>
</feature>
<feature type="transmembrane region" description="Helical" evidence="1">
    <location>
        <begin position="478"/>
        <end position="498"/>
    </location>
</feature>
<feature type="transmembrane region" description="Helical" evidence="1">
    <location>
        <begin position="520"/>
        <end position="540"/>
    </location>
</feature>
<feature type="transmembrane region" description="Helical" evidence="1">
    <location>
        <begin position="545"/>
        <end position="565"/>
    </location>
</feature>
<keyword id="KW-0997">Cell inner membrane</keyword>
<keyword id="KW-1003">Cell membrane</keyword>
<keyword id="KW-0143">Chaperone</keyword>
<keyword id="KW-0472">Membrane</keyword>
<keyword id="KW-0653">Protein transport</keyword>
<keyword id="KW-0812">Transmembrane</keyword>
<keyword id="KW-1133">Transmembrane helix</keyword>
<keyword id="KW-0813">Transport</keyword>
<sequence length="618" mass="70856">MDKNTITGLVLIGILLVGFSFLSRPSEEQIAAQKRYYDSIAVVQQQEEALRAKTEAALANEKEETAADSASLFFSATKGKEAFTTIQNNLVEITLDNKGGRVYSALLKNYMGQDKKPVVLFNGSDASMNFNFYNKKGALQTKDFYFEAVNKTDSSVTMRLAADSASYIDFIYTLKPDNYLMSFVIKATGMDGKLAASTNYVDISWSQRARQIEKGYTYENRLADLTYKYTGDDVDNLSASKDDEKSVSERLDWIAFKNQFFSSVFIAEQDFEKTTVKSKMEKQGSGYIKDYSAEMSTFFDPTGKQPTDMYFYFGPNHYKTLTALDKGREEKWELNNLVYLGWPLIRWINKWITINVFDWLSGWGLSMGIVLLLLTIMVKIVVFPATWKTYMSSAKMRVLKPKIDEINKKYPKQEDAMKKQQEVMGLYSQYGVSPMGGCLPMLLQFPILMALFMFVPSAIELRQQSFLWADDLSTYDAFITFPFHIPFLGNHLSLFCLLMTVTNILNTKYTMQQQDTGAQPQMAAMKWMMYLMPIMFLFVLNDYPSGLNYYYFISTLISVVTMIILRRTTDENKLLTELEAKKKDPKQMKKTGFAARLEAMQKQQEQLAKERANKQNKK</sequence>
<accession>Q5LC41</accession>
<dbReference type="EMBL" id="CR626927">
    <property type="protein sequence ID" value="CAH08325.1"/>
    <property type="molecule type" value="Genomic_DNA"/>
</dbReference>
<dbReference type="RefSeq" id="WP_005788172.1">
    <property type="nucleotide sequence ID" value="NZ_UFTH01000001.1"/>
</dbReference>
<dbReference type="SMR" id="Q5LC41"/>
<dbReference type="PaxDb" id="272559-BF9343_2544"/>
<dbReference type="GeneID" id="60368069"/>
<dbReference type="KEGG" id="bfs:BF9343_2544"/>
<dbReference type="eggNOG" id="COG0706">
    <property type="taxonomic scope" value="Bacteria"/>
</dbReference>
<dbReference type="HOGENOM" id="CLU_016535_2_0_10"/>
<dbReference type="Proteomes" id="UP000006731">
    <property type="component" value="Chromosome"/>
</dbReference>
<dbReference type="GO" id="GO:0005886">
    <property type="term" value="C:plasma membrane"/>
    <property type="evidence" value="ECO:0007669"/>
    <property type="project" value="UniProtKB-SubCell"/>
</dbReference>
<dbReference type="GO" id="GO:0032977">
    <property type="term" value="F:membrane insertase activity"/>
    <property type="evidence" value="ECO:0007669"/>
    <property type="project" value="InterPro"/>
</dbReference>
<dbReference type="GO" id="GO:0051205">
    <property type="term" value="P:protein insertion into membrane"/>
    <property type="evidence" value="ECO:0007669"/>
    <property type="project" value="TreeGrafter"/>
</dbReference>
<dbReference type="GO" id="GO:0015031">
    <property type="term" value="P:protein transport"/>
    <property type="evidence" value="ECO:0007669"/>
    <property type="project" value="UniProtKB-KW"/>
</dbReference>
<dbReference type="CDD" id="cd20070">
    <property type="entry name" value="5TM_YidC_Alb3"/>
    <property type="match status" value="1"/>
</dbReference>
<dbReference type="CDD" id="cd19961">
    <property type="entry name" value="EcYidC-like_peri"/>
    <property type="match status" value="1"/>
</dbReference>
<dbReference type="Gene3D" id="2.70.98.90">
    <property type="match status" value="1"/>
</dbReference>
<dbReference type="HAMAP" id="MF_01810">
    <property type="entry name" value="YidC_type1"/>
    <property type="match status" value="1"/>
</dbReference>
<dbReference type="InterPro" id="IPR019998">
    <property type="entry name" value="Membr_insert_YidC"/>
</dbReference>
<dbReference type="InterPro" id="IPR028053">
    <property type="entry name" value="Membr_insert_YidC_N"/>
</dbReference>
<dbReference type="InterPro" id="IPR001708">
    <property type="entry name" value="YidC/ALB3/OXA1/COX18"/>
</dbReference>
<dbReference type="InterPro" id="IPR028055">
    <property type="entry name" value="YidC/Oxa/ALB_C"/>
</dbReference>
<dbReference type="InterPro" id="IPR047196">
    <property type="entry name" value="YidC_ALB_C"/>
</dbReference>
<dbReference type="InterPro" id="IPR038221">
    <property type="entry name" value="YidC_periplasmic_sf"/>
</dbReference>
<dbReference type="NCBIfam" id="NF002356">
    <property type="entry name" value="PRK01318.2-3"/>
    <property type="match status" value="1"/>
</dbReference>
<dbReference type="NCBIfam" id="TIGR03593">
    <property type="entry name" value="yidC_nterm"/>
    <property type="match status" value="1"/>
</dbReference>
<dbReference type="NCBIfam" id="TIGR03592">
    <property type="entry name" value="yidC_oxa1_cterm"/>
    <property type="match status" value="1"/>
</dbReference>
<dbReference type="PANTHER" id="PTHR12428:SF65">
    <property type="entry name" value="CYTOCHROME C OXIDASE ASSEMBLY PROTEIN COX18, MITOCHONDRIAL"/>
    <property type="match status" value="1"/>
</dbReference>
<dbReference type="PANTHER" id="PTHR12428">
    <property type="entry name" value="OXA1"/>
    <property type="match status" value="1"/>
</dbReference>
<dbReference type="Pfam" id="PF02096">
    <property type="entry name" value="60KD_IMP"/>
    <property type="match status" value="1"/>
</dbReference>
<dbReference type="Pfam" id="PF14849">
    <property type="entry name" value="YidC_periplas"/>
    <property type="match status" value="1"/>
</dbReference>
<dbReference type="PRINTS" id="PR00701">
    <property type="entry name" value="60KDINNERMP"/>
</dbReference>
<comment type="function">
    <text evidence="1">Required for the insertion and/or proper folding and/or complex formation of integral membrane proteins into the membrane. Involved in integration of membrane proteins that insert both dependently and independently of the Sec translocase complex, as well as at least some lipoproteins. Aids folding of multispanning membrane proteins.</text>
</comment>
<comment type="subunit">
    <text evidence="1">Interacts with the Sec translocase complex via SecD. Specifically interacts with transmembrane segments of nascent integral membrane proteins during membrane integration.</text>
</comment>
<comment type="subcellular location">
    <subcellularLocation>
        <location evidence="1">Cell inner membrane</location>
        <topology evidence="1">Multi-pass membrane protein</topology>
    </subcellularLocation>
</comment>
<comment type="similarity">
    <text evidence="1">Belongs to the OXA1/ALB3/YidC family. Type 1 subfamily.</text>
</comment>
<evidence type="ECO:0000255" key="1">
    <source>
        <dbReference type="HAMAP-Rule" id="MF_01810"/>
    </source>
</evidence>